<accession>A2AKK5</accession>
<accession>A2AKK4</accession>
<accession>Q0QBA1</accession>
<dbReference type="EC" id="2.3.1.-"/>
<dbReference type="EMBL" id="DQ469311">
    <property type="protein sequence ID" value="ABE98441.1"/>
    <property type="molecule type" value="mRNA"/>
</dbReference>
<dbReference type="EMBL" id="AL772310">
    <property type="status" value="NOT_ANNOTATED_CDS"/>
    <property type="molecule type" value="Genomic_DNA"/>
</dbReference>
<dbReference type="CCDS" id="CCDS51174.1">
    <molecule id="A2AKK5-1"/>
</dbReference>
<dbReference type="RefSeq" id="NP_001158037.1">
    <molecule id="A2AKK5-1"/>
    <property type="nucleotide sequence ID" value="NM_001164565.1"/>
</dbReference>
<dbReference type="RefSeq" id="XP_006537905.1">
    <molecule id="A2AKK5-1"/>
    <property type="nucleotide sequence ID" value="XM_006537842.4"/>
</dbReference>
<dbReference type="RefSeq" id="XP_006537906.1">
    <molecule id="A2AKK5-1"/>
    <property type="nucleotide sequence ID" value="XM_006537843.4"/>
</dbReference>
<dbReference type="RefSeq" id="XP_011248303.1">
    <property type="nucleotide sequence ID" value="XM_011250001.2"/>
</dbReference>
<dbReference type="RefSeq" id="XP_011248304.1">
    <molecule id="A2AKK5-1"/>
    <property type="nucleotide sequence ID" value="XM_011250002.3"/>
</dbReference>
<dbReference type="RefSeq" id="XP_011248305.1">
    <molecule id="A2AKK5-1"/>
    <property type="nucleotide sequence ID" value="XM_011250003.3"/>
</dbReference>
<dbReference type="RefSeq" id="XP_011248306.1">
    <molecule id="A2AKK5-1"/>
    <property type="nucleotide sequence ID" value="XM_011250004.3"/>
</dbReference>
<dbReference type="RefSeq" id="XP_011248307.1">
    <molecule id="A2AKK5-1"/>
    <property type="nucleotide sequence ID" value="XM_011250005.3"/>
</dbReference>
<dbReference type="RefSeq" id="XP_030109278.1">
    <molecule id="A2AKK5-1"/>
    <property type="nucleotide sequence ID" value="XM_030253418.1"/>
</dbReference>
<dbReference type="SMR" id="A2AKK5"/>
<dbReference type="BioGRID" id="230942">
    <property type="interactions" value="1"/>
</dbReference>
<dbReference type="FunCoup" id="A2AKK5">
    <property type="interactions" value="152"/>
</dbReference>
<dbReference type="STRING" id="10090.ENSMUSP00000092702"/>
<dbReference type="SwissLipids" id="SLP:000001601">
    <molecule id="A2AKK5-1"/>
</dbReference>
<dbReference type="ESTHER" id="mouse-acnt1">
    <property type="family name" value="Acyl-CoA_Thioesterase"/>
</dbReference>
<dbReference type="MEROPS" id="S09.A49"/>
<dbReference type="iPTMnet" id="A2AKK5"/>
<dbReference type="PhosphoSitePlus" id="A2AKK5"/>
<dbReference type="SwissPalm" id="A2AKK5"/>
<dbReference type="jPOST" id="A2AKK5"/>
<dbReference type="PaxDb" id="10090-ENSMUSP00000092702"/>
<dbReference type="PeptideAtlas" id="A2AKK5"/>
<dbReference type="ProteomicsDB" id="285589">
    <molecule id="A2AKK5-1"/>
</dbReference>
<dbReference type="ProteomicsDB" id="285590">
    <molecule id="A2AKK5-2"/>
</dbReference>
<dbReference type="Ensembl" id="ENSMUST00000095086.3">
    <molecule id="A2AKK5-1"/>
    <property type="protein sequence ID" value="ENSMUSP00000092702.3"/>
    <property type="gene ID" value="ENSMUSG00000070985.4"/>
</dbReference>
<dbReference type="Ensembl" id="ENSMUST00000107697.2">
    <molecule id="A2AKK5-2"/>
    <property type="protein sequence ID" value="ENSMUSP00000103325.2"/>
    <property type="gene ID" value="ENSMUSG00000070985.4"/>
</dbReference>
<dbReference type="GeneID" id="230161"/>
<dbReference type="KEGG" id="mmu:230161"/>
<dbReference type="UCSC" id="uc008svr.2">
    <molecule id="A2AKK5-1"/>
    <property type="organism name" value="mouse"/>
</dbReference>
<dbReference type="AGR" id="MGI:2140197"/>
<dbReference type="CTD" id="230161"/>
<dbReference type="MGI" id="MGI:2140197">
    <property type="gene designation" value="Acnat1"/>
</dbReference>
<dbReference type="VEuPathDB" id="HostDB:ENSMUSG00000070985"/>
<dbReference type="eggNOG" id="ENOG502QQ8Z">
    <property type="taxonomic scope" value="Eukaryota"/>
</dbReference>
<dbReference type="GeneTree" id="ENSGT01010000222336"/>
<dbReference type="HOGENOM" id="CLU_029849_4_0_1"/>
<dbReference type="InParanoid" id="A2AKK5"/>
<dbReference type="OMA" id="RPFLWGG"/>
<dbReference type="OrthoDB" id="6347013at2759"/>
<dbReference type="PhylomeDB" id="A2AKK5"/>
<dbReference type="TreeFam" id="TF314911"/>
<dbReference type="SABIO-RK" id="A2AKK5"/>
<dbReference type="BioGRID-ORCS" id="230161">
    <property type="hits" value="0 hits in 76 CRISPR screens"/>
</dbReference>
<dbReference type="ChiTaRS" id="Acnat1">
    <property type="organism name" value="mouse"/>
</dbReference>
<dbReference type="PRO" id="PR:A2AKK5"/>
<dbReference type="Proteomes" id="UP000000589">
    <property type="component" value="Chromosome 4"/>
</dbReference>
<dbReference type="RNAct" id="A2AKK5">
    <property type="molecule type" value="protein"/>
</dbReference>
<dbReference type="Bgee" id="ENSMUSG00000070985">
    <property type="expression patterns" value="Expressed in liver and 34 other cell types or tissues"/>
</dbReference>
<dbReference type="ExpressionAtlas" id="A2AKK5">
    <property type="expression patterns" value="baseline and differential"/>
</dbReference>
<dbReference type="GO" id="GO:0005777">
    <property type="term" value="C:peroxisome"/>
    <property type="evidence" value="ECO:0000314"/>
    <property type="project" value="UniProtKB"/>
</dbReference>
<dbReference type="GO" id="GO:0016410">
    <property type="term" value="F:N-acyltransferase activity"/>
    <property type="evidence" value="ECO:0000314"/>
    <property type="project" value="UniProtKB"/>
</dbReference>
<dbReference type="GO" id="GO:0016790">
    <property type="term" value="F:thiolester hydrolase activity"/>
    <property type="evidence" value="ECO:0007669"/>
    <property type="project" value="InterPro"/>
</dbReference>
<dbReference type="GO" id="GO:0006637">
    <property type="term" value="P:acyl-CoA metabolic process"/>
    <property type="evidence" value="ECO:0007669"/>
    <property type="project" value="InterPro"/>
</dbReference>
<dbReference type="GO" id="GO:0006631">
    <property type="term" value="P:fatty acid metabolic process"/>
    <property type="evidence" value="ECO:0000314"/>
    <property type="project" value="UniProtKB"/>
</dbReference>
<dbReference type="FunFam" id="2.60.40.2240:FF:000001">
    <property type="entry name" value="acyl-coenzyme A thioesterase 4"/>
    <property type="match status" value="1"/>
</dbReference>
<dbReference type="FunFam" id="3.40.50.1820:FF:000024">
    <property type="entry name" value="acyl-coenzyme A thioesterase 4"/>
    <property type="match status" value="1"/>
</dbReference>
<dbReference type="Gene3D" id="2.60.40.2240">
    <property type="entry name" value="Acyl-CoA thioester hydrolase/BAAT N-terminal domain"/>
    <property type="match status" value="1"/>
</dbReference>
<dbReference type="Gene3D" id="3.40.50.1820">
    <property type="entry name" value="alpha/beta hydrolase"/>
    <property type="match status" value="1"/>
</dbReference>
<dbReference type="InterPro" id="IPR029058">
    <property type="entry name" value="AB_hydrolase_fold"/>
</dbReference>
<dbReference type="InterPro" id="IPR016662">
    <property type="entry name" value="Acyl-CoA_thioEstase_long-chain"/>
</dbReference>
<dbReference type="InterPro" id="IPR014940">
    <property type="entry name" value="BAAT_C"/>
</dbReference>
<dbReference type="InterPro" id="IPR006862">
    <property type="entry name" value="Thio_Ohase/aa_AcTrfase"/>
</dbReference>
<dbReference type="InterPro" id="IPR042490">
    <property type="entry name" value="Thio_Ohase/BAAT_N"/>
</dbReference>
<dbReference type="PANTHER" id="PTHR10824:SF1">
    <property type="entry name" value="ACYL-COENZYME A AMINO ACID N-ACYLTRANSFERASE 1-RELATED"/>
    <property type="match status" value="1"/>
</dbReference>
<dbReference type="PANTHER" id="PTHR10824">
    <property type="entry name" value="ACYL-COENZYME A THIOESTERASE-RELATED"/>
    <property type="match status" value="1"/>
</dbReference>
<dbReference type="Pfam" id="PF08840">
    <property type="entry name" value="BAAT_C"/>
    <property type="match status" value="1"/>
</dbReference>
<dbReference type="Pfam" id="PF04775">
    <property type="entry name" value="Bile_Hydr_Trans"/>
    <property type="match status" value="1"/>
</dbReference>
<dbReference type="PIRSF" id="PIRSF016521">
    <property type="entry name" value="Acyl-CoA_hydro"/>
    <property type="match status" value="1"/>
</dbReference>
<dbReference type="SUPFAM" id="SSF53474">
    <property type="entry name" value="alpha/beta-Hydrolases"/>
    <property type="match status" value="1"/>
</dbReference>
<proteinExistence type="evidence at protein level"/>
<protein>
    <recommendedName>
        <fullName evidence="5">Acyl-coenzyme A amino acid N-acyltransferase 1</fullName>
        <ecNumber>2.3.1.-</ecNumber>
    </recommendedName>
</protein>
<comment type="function">
    <text evidence="4">Acyltransferase which efficiently conjugates very long-chain and long-chain fatty acids to taurine (PubMed:17116739). Shows no conjugation activity in the presence of glycine (PubMed:17116739).</text>
</comment>
<comment type="catalytic activity">
    <reaction evidence="4">
        <text>tetracosanoyl-CoA + taurine = N-tetracosanoyl-taurine + CoA + H(+)</text>
        <dbReference type="Rhea" id="RHEA:50120"/>
        <dbReference type="ChEBI" id="CHEBI:15378"/>
        <dbReference type="ChEBI" id="CHEBI:57287"/>
        <dbReference type="ChEBI" id="CHEBI:65052"/>
        <dbReference type="ChEBI" id="CHEBI:132049"/>
        <dbReference type="ChEBI" id="CHEBI:507393"/>
    </reaction>
</comment>
<comment type="catalytic activity">
    <reaction evidence="4">
        <text>eicosanoyl-CoA + taurine = N-eicosanoyl-taurine + CoA + H(+)</text>
        <dbReference type="Rhea" id="RHEA:50116"/>
        <dbReference type="ChEBI" id="CHEBI:15378"/>
        <dbReference type="ChEBI" id="CHEBI:57287"/>
        <dbReference type="ChEBI" id="CHEBI:57380"/>
        <dbReference type="ChEBI" id="CHEBI:132048"/>
        <dbReference type="ChEBI" id="CHEBI:507393"/>
    </reaction>
</comment>
<comment type="catalytic activity">
    <reaction evidence="4">
        <text>taurine + octadecanoyl-CoA = N-octadecanoyl-taurine + CoA + H(+)</text>
        <dbReference type="Rhea" id="RHEA:50112"/>
        <dbReference type="ChEBI" id="CHEBI:15378"/>
        <dbReference type="ChEBI" id="CHEBI:57287"/>
        <dbReference type="ChEBI" id="CHEBI:57394"/>
        <dbReference type="ChEBI" id="CHEBI:132047"/>
        <dbReference type="ChEBI" id="CHEBI:507393"/>
    </reaction>
</comment>
<comment type="catalytic activity">
    <reaction evidence="4">
        <text>taurine + hexadecanoyl-CoA = N-hexadecanoyl-taurine + CoA + H(+)</text>
        <dbReference type="Rhea" id="RHEA:50108"/>
        <dbReference type="ChEBI" id="CHEBI:15378"/>
        <dbReference type="ChEBI" id="CHEBI:57287"/>
        <dbReference type="ChEBI" id="CHEBI:57379"/>
        <dbReference type="ChEBI" id="CHEBI:132045"/>
        <dbReference type="ChEBI" id="CHEBI:507393"/>
    </reaction>
</comment>
<comment type="catalytic activity">
    <reaction evidence="4">
        <text>tetradecanoyl-CoA + taurine = N-tetradecanoyl-taurine + CoA + H(+)</text>
        <dbReference type="Rhea" id="RHEA:50104"/>
        <dbReference type="ChEBI" id="CHEBI:15378"/>
        <dbReference type="ChEBI" id="CHEBI:57287"/>
        <dbReference type="ChEBI" id="CHEBI:57385"/>
        <dbReference type="ChEBI" id="CHEBI:132043"/>
        <dbReference type="ChEBI" id="CHEBI:507393"/>
    </reaction>
</comment>
<comment type="catalytic activity">
    <reaction evidence="4">
        <text>dodecanoyl-CoA + taurine = N-dodecanoyl-taurine + CoA + H(+)</text>
        <dbReference type="Rhea" id="RHEA:50100"/>
        <dbReference type="ChEBI" id="CHEBI:15378"/>
        <dbReference type="ChEBI" id="CHEBI:57287"/>
        <dbReference type="ChEBI" id="CHEBI:57375"/>
        <dbReference type="ChEBI" id="CHEBI:132042"/>
        <dbReference type="ChEBI" id="CHEBI:507393"/>
    </reaction>
</comment>
<comment type="biophysicochemical properties">
    <kinetics>
        <KM evidence="4">11 uM for C16:0-coenzyme A</KM>
        <Vmax evidence="4">159.5 nmol/min/mg enzyme</Vmax>
    </kinetics>
</comment>
<comment type="subcellular location">
    <subcellularLocation>
        <location evidence="4">Peroxisome</location>
    </subcellularLocation>
</comment>
<comment type="alternative products">
    <event type="alternative splicing"/>
    <isoform>
        <id>A2AKK5-1</id>
        <name evidence="4">1</name>
        <sequence type="displayed"/>
    </isoform>
    <isoform>
        <id>A2AKK5-2</id>
        <name>2</name>
        <sequence type="described" ref="VSP_052953"/>
    </isoform>
</comment>
<comment type="tissue specificity">
    <text evidence="4">Expressed mainly in liver and kidney with low levels in adrenal and little or no expression in other tissues.</text>
</comment>
<comment type="similarity">
    <text evidence="3">Belongs to the C/M/P thioester hydrolase family.</text>
</comment>
<sequence>MMIKLIATPSNALVDEPVSIRATGLPPSQIVTIKATVKDENDNVFQSQAFYKTNEAGEVDLEKTPALGGDYVGVHPMGLFFSLKPKKAFHRLMKKDVMNSPFCICLDLYDSVNWLETVRIPSKASQRVQRWFVGPGVKREQIQEGRVRGALFLPPGKGPFPGIIDLFGVIGGLVEFRASLLASHGFAVLALAYFAYKDLPEKLQEVDLEYFEEAANFLLSHPKIQQPGIGVISTSKGAEIGLAMACYLKQVIATVCINGATTTTAVPLRYQDLVVTPIQQALERMEVHVSGAVCFRHTTQYLQNKNILPVEKAQGKILFIVGENDELLDSKLHAQRAMDRLRRHGRSSGRMLAYPGAGHLIEPPYSPLCFASWQPVLGRPMCFGGDLMAHAAAQEHSWREIQKFFRKHLLQSGSKL</sequence>
<feature type="chain" id="PRO_0000352774" description="Acyl-coenzyme A amino acid N-acyltransferase 1">
    <location>
        <begin position="1"/>
        <end position="416"/>
    </location>
</feature>
<feature type="short sequence motif" description="Microbody targeting signal">
    <location>
        <begin position="414"/>
        <end position="416"/>
    </location>
</feature>
<feature type="active site" description="Charge relay system" evidence="1">
    <location>
        <position position="235"/>
    </location>
</feature>
<feature type="active site" description="Charge relay system" evidence="1">
    <location>
        <position position="325"/>
    </location>
</feature>
<feature type="active site" description="Charge relay system" evidence="1">
    <location>
        <position position="359"/>
    </location>
</feature>
<feature type="modified residue" description="Phosphoserine" evidence="2">
    <location>
        <position position="125"/>
    </location>
</feature>
<feature type="modified residue" description="Phosphoserine" evidence="2">
    <location>
        <position position="414"/>
    </location>
</feature>
<feature type="splice variant" id="VSP_052953" description="In isoform 2." evidence="6">
    <location>
        <begin position="156"/>
        <end position="173"/>
    </location>
</feature>
<feature type="sequence conflict" description="In Ref. 1; ABE98441." evidence="6" ref="1">
    <original>K</original>
    <variation>Q</variation>
    <location>
        <position position="4"/>
    </location>
</feature>
<feature type="sequence conflict" description="In Ref. 1; ABE98441." evidence="6" ref="1">
    <original>F</original>
    <variation>L</variation>
    <location>
        <position position="370"/>
    </location>
</feature>
<name>ACNT1_MOUSE</name>
<reference evidence="6 7" key="1">
    <citation type="journal article" date="2007" name="FASEB J.">
        <title>A peroxisomal acyltransferase in mouse identifies a novel pathway for taurine conjugation of fatty acids.</title>
        <authorList>
            <person name="Reilly S.-J."/>
            <person name="O'Shea E.M."/>
            <person name="Andersson U."/>
            <person name="O'Byrne J."/>
            <person name="Alexson S.E.H."/>
            <person name="Hunt M.C."/>
        </authorList>
    </citation>
    <scope>NUCLEOTIDE SEQUENCE [MRNA] (ISOFORM 1)</scope>
    <scope>FUNCTION</scope>
    <scope>BIOPHYSICOCHEMICAL PROPERTIES</scope>
    <scope>SUBCELLULAR LOCATION</scope>
    <scope>TISSUE SPECIFICITY</scope>
    <scope>CATALYTIC ACTIVITY</scope>
    <source>
        <strain evidence="7">129/Sv</strain>
    </source>
</reference>
<reference key="2">
    <citation type="journal article" date="2009" name="PLoS Biol.">
        <title>Lineage-specific biology revealed by a finished genome assembly of the mouse.</title>
        <authorList>
            <person name="Church D.M."/>
            <person name="Goodstadt L."/>
            <person name="Hillier L.W."/>
            <person name="Zody M.C."/>
            <person name="Goldstein S."/>
            <person name="She X."/>
            <person name="Bult C.J."/>
            <person name="Agarwala R."/>
            <person name="Cherry J.L."/>
            <person name="DiCuccio M."/>
            <person name="Hlavina W."/>
            <person name="Kapustin Y."/>
            <person name="Meric P."/>
            <person name="Maglott D."/>
            <person name="Birtle Z."/>
            <person name="Marques A.C."/>
            <person name="Graves T."/>
            <person name="Zhou S."/>
            <person name="Teague B."/>
            <person name="Potamousis K."/>
            <person name="Churas C."/>
            <person name="Place M."/>
            <person name="Herschleb J."/>
            <person name="Runnheim R."/>
            <person name="Forrest D."/>
            <person name="Amos-Landgraf J."/>
            <person name="Schwartz D.C."/>
            <person name="Cheng Z."/>
            <person name="Lindblad-Toh K."/>
            <person name="Eichler E.E."/>
            <person name="Ponting C.P."/>
        </authorList>
    </citation>
    <scope>NUCLEOTIDE SEQUENCE [LARGE SCALE GENOMIC DNA]</scope>
    <source>
        <strain>C57BL/6J</strain>
    </source>
</reference>
<reference key="3">
    <citation type="journal article" date="2010" name="Cell">
        <title>A tissue-specific atlas of mouse protein phosphorylation and expression.</title>
        <authorList>
            <person name="Huttlin E.L."/>
            <person name="Jedrychowski M.P."/>
            <person name="Elias J.E."/>
            <person name="Goswami T."/>
            <person name="Rad R."/>
            <person name="Beausoleil S.A."/>
            <person name="Villen J."/>
            <person name="Haas W."/>
            <person name="Sowa M.E."/>
            <person name="Gygi S.P."/>
        </authorList>
    </citation>
    <scope>IDENTIFICATION BY MASS SPECTROMETRY [LARGE SCALE ANALYSIS]</scope>
    <source>
        <tissue>Kidney</tissue>
        <tissue>Liver</tissue>
    </source>
</reference>
<organism>
    <name type="scientific">Mus musculus</name>
    <name type="common">Mouse</name>
    <dbReference type="NCBI Taxonomy" id="10090"/>
    <lineage>
        <taxon>Eukaryota</taxon>
        <taxon>Metazoa</taxon>
        <taxon>Chordata</taxon>
        <taxon>Craniata</taxon>
        <taxon>Vertebrata</taxon>
        <taxon>Euteleostomi</taxon>
        <taxon>Mammalia</taxon>
        <taxon>Eutheria</taxon>
        <taxon>Euarchontoglires</taxon>
        <taxon>Glires</taxon>
        <taxon>Rodentia</taxon>
        <taxon>Myomorpha</taxon>
        <taxon>Muroidea</taxon>
        <taxon>Muridae</taxon>
        <taxon>Murinae</taxon>
        <taxon>Mus</taxon>
        <taxon>Mus</taxon>
    </lineage>
</organism>
<keyword id="KW-0012">Acyltransferase</keyword>
<keyword id="KW-0025">Alternative splicing</keyword>
<keyword id="KW-0276">Fatty acid metabolism</keyword>
<keyword id="KW-0443">Lipid metabolism</keyword>
<keyword id="KW-0576">Peroxisome</keyword>
<keyword id="KW-0597">Phosphoprotein</keyword>
<keyword id="KW-1185">Reference proteome</keyword>
<keyword id="KW-0808">Transferase</keyword>
<evidence type="ECO:0000250" key="1">
    <source>
        <dbReference type="UniProtKB" id="O55137"/>
    </source>
</evidence>
<evidence type="ECO:0000250" key="2">
    <source>
        <dbReference type="UniProtKB" id="Q63276"/>
    </source>
</evidence>
<evidence type="ECO:0000255" key="3"/>
<evidence type="ECO:0000269" key="4">
    <source>
    </source>
</evidence>
<evidence type="ECO:0000303" key="5">
    <source>
    </source>
</evidence>
<evidence type="ECO:0000305" key="6"/>
<evidence type="ECO:0000312" key="7">
    <source>
        <dbReference type="EMBL" id="ABE98441.1"/>
    </source>
</evidence>
<evidence type="ECO:0000312" key="8">
    <source>
        <dbReference type="MGI" id="MGI:2140197"/>
    </source>
</evidence>
<gene>
    <name evidence="8" type="primary">Acnat1</name>
</gene>